<gene>
    <name evidence="1" type="primary">pepT</name>
    <name type="ordered locus">EcE24377A_1290</name>
</gene>
<protein>
    <recommendedName>
        <fullName evidence="1">Peptidase T</fullName>
        <ecNumber evidence="1">3.4.11.4</ecNumber>
    </recommendedName>
    <alternativeName>
        <fullName evidence="1">Aminotripeptidase</fullName>
        <shortName evidence="1">Tripeptidase</shortName>
    </alternativeName>
    <alternativeName>
        <fullName evidence="1">Tripeptide aminopeptidase</fullName>
    </alternativeName>
</protein>
<sequence length="409" mass="44996">MDKLLERFLNYVSLDTQSKAGVRQVPSTEGQWKLLHLLKEQLEEMGLINVTLSEKGTLMATLPANVPGDIPAIGFISHVDTSPDCSGKNVNPQIVENYRGGDIALGIGDEVLSPVMFPVLHQLLGQTLITTDGKTLLGADDKAGIAEIMTALAVLQQKNIPHGDIRVAFTPDEEVGKGAKHFDVDAFDARWAYTVDGGGVGELEFENFNAASVNIKIVGNNVHPGTAKGVMVNALSLAARIHAEVPADESPEMTEGYEGFYHLASMKGTVERADMHYIIRDFDRKQFEARKRKMMEIAKKVGKGLHPDCYIELVIEDSYYNMREKVVEHPHILDIAQQAMRDCDIEPELKPIRGGTDGAQLSFMGLPCPNLFTGGYNYHGKHEFVTLEGMEKAVQVIVRIAELTAQRKS</sequence>
<proteinExistence type="inferred from homology"/>
<keyword id="KW-0031">Aminopeptidase</keyword>
<keyword id="KW-0963">Cytoplasm</keyword>
<keyword id="KW-0378">Hydrolase</keyword>
<keyword id="KW-0479">Metal-binding</keyword>
<keyword id="KW-0482">Metalloprotease</keyword>
<keyword id="KW-0645">Protease</keyword>
<keyword id="KW-1185">Reference proteome</keyword>
<keyword id="KW-0862">Zinc</keyword>
<accession>A7ZKR7</accession>
<reference key="1">
    <citation type="journal article" date="2008" name="J. Bacteriol.">
        <title>The pangenome structure of Escherichia coli: comparative genomic analysis of E. coli commensal and pathogenic isolates.</title>
        <authorList>
            <person name="Rasko D.A."/>
            <person name="Rosovitz M.J."/>
            <person name="Myers G.S.A."/>
            <person name="Mongodin E.F."/>
            <person name="Fricke W.F."/>
            <person name="Gajer P."/>
            <person name="Crabtree J."/>
            <person name="Sebaihia M."/>
            <person name="Thomson N.R."/>
            <person name="Chaudhuri R."/>
            <person name="Henderson I.R."/>
            <person name="Sperandio V."/>
            <person name="Ravel J."/>
        </authorList>
    </citation>
    <scope>NUCLEOTIDE SEQUENCE [LARGE SCALE GENOMIC DNA]</scope>
    <source>
        <strain>E24377A / ETEC</strain>
    </source>
</reference>
<comment type="function">
    <text evidence="1">Cleaves the N-terminal amino acid of tripeptides.</text>
</comment>
<comment type="catalytic activity">
    <reaction evidence="1">
        <text>Release of the N-terminal residue from a tripeptide.</text>
        <dbReference type="EC" id="3.4.11.4"/>
    </reaction>
</comment>
<comment type="cofactor">
    <cofactor evidence="1">
        <name>Zn(2+)</name>
        <dbReference type="ChEBI" id="CHEBI:29105"/>
    </cofactor>
    <text evidence="1">Binds 2 Zn(2+) ions per subunit.</text>
</comment>
<comment type="subcellular location">
    <subcellularLocation>
        <location evidence="1">Cytoplasm</location>
    </subcellularLocation>
</comment>
<comment type="similarity">
    <text evidence="1">Belongs to the peptidase M20B family.</text>
</comment>
<dbReference type="EC" id="3.4.11.4" evidence="1"/>
<dbReference type="EMBL" id="CP000800">
    <property type="protein sequence ID" value="ABV18676.1"/>
    <property type="molecule type" value="Genomic_DNA"/>
</dbReference>
<dbReference type="RefSeq" id="WP_000359447.1">
    <property type="nucleotide sequence ID" value="NC_009801.1"/>
</dbReference>
<dbReference type="SMR" id="A7ZKR7"/>
<dbReference type="MEROPS" id="M20.003"/>
<dbReference type="GeneID" id="75171249"/>
<dbReference type="KEGG" id="ecw:EcE24377A_1290"/>
<dbReference type="HOGENOM" id="CLU_053676_0_0_6"/>
<dbReference type="Proteomes" id="UP000001122">
    <property type="component" value="Chromosome"/>
</dbReference>
<dbReference type="GO" id="GO:0005829">
    <property type="term" value="C:cytosol"/>
    <property type="evidence" value="ECO:0007669"/>
    <property type="project" value="TreeGrafter"/>
</dbReference>
<dbReference type="GO" id="GO:0008237">
    <property type="term" value="F:metallopeptidase activity"/>
    <property type="evidence" value="ECO:0007669"/>
    <property type="project" value="UniProtKB-KW"/>
</dbReference>
<dbReference type="GO" id="GO:0045148">
    <property type="term" value="F:tripeptide aminopeptidase activity"/>
    <property type="evidence" value="ECO:0007669"/>
    <property type="project" value="UniProtKB-UniRule"/>
</dbReference>
<dbReference type="GO" id="GO:0008270">
    <property type="term" value="F:zinc ion binding"/>
    <property type="evidence" value="ECO:0007669"/>
    <property type="project" value="UniProtKB-UniRule"/>
</dbReference>
<dbReference type="GO" id="GO:0043171">
    <property type="term" value="P:peptide catabolic process"/>
    <property type="evidence" value="ECO:0007669"/>
    <property type="project" value="UniProtKB-UniRule"/>
</dbReference>
<dbReference type="GO" id="GO:0006508">
    <property type="term" value="P:proteolysis"/>
    <property type="evidence" value="ECO:0007669"/>
    <property type="project" value="UniProtKB-UniRule"/>
</dbReference>
<dbReference type="CDD" id="cd03892">
    <property type="entry name" value="M20_peptT"/>
    <property type="match status" value="1"/>
</dbReference>
<dbReference type="FunFam" id="3.30.70.360:FF:000002">
    <property type="entry name" value="Peptidase T"/>
    <property type="match status" value="1"/>
</dbReference>
<dbReference type="Gene3D" id="3.30.70.360">
    <property type="match status" value="1"/>
</dbReference>
<dbReference type="Gene3D" id="3.40.630.10">
    <property type="entry name" value="Zn peptidases"/>
    <property type="match status" value="1"/>
</dbReference>
<dbReference type="HAMAP" id="MF_00550">
    <property type="entry name" value="Aminopeptidase_M20"/>
    <property type="match status" value="1"/>
</dbReference>
<dbReference type="InterPro" id="IPR001261">
    <property type="entry name" value="ArgE/DapE_CS"/>
</dbReference>
<dbReference type="InterPro" id="IPR036264">
    <property type="entry name" value="Bact_exopeptidase_dim_dom"/>
</dbReference>
<dbReference type="InterPro" id="IPR002933">
    <property type="entry name" value="Peptidase_M20"/>
</dbReference>
<dbReference type="InterPro" id="IPR011650">
    <property type="entry name" value="Peptidase_M20_dimer"/>
</dbReference>
<dbReference type="InterPro" id="IPR010161">
    <property type="entry name" value="Peptidase_M20B"/>
</dbReference>
<dbReference type="NCBIfam" id="TIGR01882">
    <property type="entry name" value="peptidase-T"/>
    <property type="match status" value="1"/>
</dbReference>
<dbReference type="NCBIfam" id="NF003976">
    <property type="entry name" value="PRK05469.1"/>
    <property type="match status" value="1"/>
</dbReference>
<dbReference type="NCBIfam" id="NF009920">
    <property type="entry name" value="PRK13381.1"/>
    <property type="match status" value="1"/>
</dbReference>
<dbReference type="PANTHER" id="PTHR42994">
    <property type="entry name" value="PEPTIDASE T"/>
    <property type="match status" value="1"/>
</dbReference>
<dbReference type="PANTHER" id="PTHR42994:SF1">
    <property type="entry name" value="PEPTIDASE T"/>
    <property type="match status" value="1"/>
</dbReference>
<dbReference type="Pfam" id="PF07687">
    <property type="entry name" value="M20_dimer"/>
    <property type="match status" value="1"/>
</dbReference>
<dbReference type="Pfam" id="PF01546">
    <property type="entry name" value="Peptidase_M20"/>
    <property type="match status" value="1"/>
</dbReference>
<dbReference type="PIRSF" id="PIRSF037215">
    <property type="entry name" value="Peptidase_M20B"/>
    <property type="match status" value="1"/>
</dbReference>
<dbReference type="SUPFAM" id="SSF55031">
    <property type="entry name" value="Bacterial exopeptidase dimerisation domain"/>
    <property type="match status" value="1"/>
</dbReference>
<dbReference type="SUPFAM" id="SSF53187">
    <property type="entry name" value="Zn-dependent exopeptidases"/>
    <property type="match status" value="1"/>
</dbReference>
<dbReference type="PROSITE" id="PS00758">
    <property type="entry name" value="ARGE_DAPE_CPG2_1"/>
    <property type="match status" value="1"/>
</dbReference>
<dbReference type="PROSITE" id="PS00759">
    <property type="entry name" value="ARGE_DAPE_CPG2_2"/>
    <property type="match status" value="1"/>
</dbReference>
<organism>
    <name type="scientific">Escherichia coli O139:H28 (strain E24377A / ETEC)</name>
    <dbReference type="NCBI Taxonomy" id="331111"/>
    <lineage>
        <taxon>Bacteria</taxon>
        <taxon>Pseudomonadati</taxon>
        <taxon>Pseudomonadota</taxon>
        <taxon>Gammaproteobacteria</taxon>
        <taxon>Enterobacterales</taxon>
        <taxon>Enterobacteriaceae</taxon>
        <taxon>Escherichia</taxon>
    </lineage>
</organism>
<name>PEPT_ECO24</name>
<evidence type="ECO:0000255" key="1">
    <source>
        <dbReference type="HAMAP-Rule" id="MF_00550"/>
    </source>
</evidence>
<feature type="chain" id="PRO_1000061094" description="Peptidase T">
    <location>
        <begin position="1"/>
        <end position="409"/>
    </location>
</feature>
<feature type="active site" evidence="1">
    <location>
        <position position="80"/>
    </location>
</feature>
<feature type="active site" description="Proton acceptor" evidence="1">
    <location>
        <position position="173"/>
    </location>
</feature>
<feature type="binding site" evidence="1">
    <location>
        <position position="78"/>
    </location>
    <ligand>
        <name>Zn(2+)</name>
        <dbReference type="ChEBI" id="CHEBI:29105"/>
        <label>1</label>
    </ligand>
</feature>
<feature type="binding site" evidence="1">
    <location>
        <position position="140"/>
    </location>
    <ligand>
        <name>Zn(2+)</name>
        <dbReference type="ChEBI" id="CHEBI:29105"/>
        <label>1</label>
    </ligand>
</feature>
<feature type="binding site" evidence="1">
    <location>
        <position position="140"/>
    </location>
    <ligand>
        <name>Zn(2+)</name>
        <dbReference type="ChEBI" id="CHEBI:29105"/>
        <label>2</label>
    </ligand>
</feature>
<feature type="binding site" evidence="1">
    <location>
        <position position="174"/>
    </location>
    <ligand>
        <name>Zn(2+)</name>
        <dbReference type="ChEBI" id="CHEBI:29105"/>
        <label>2</label>
    </ligand>
</feature>
<feature type="binding site" evidence="1">
    <location>
        <position position="196"/>
    </location>
    <ligand>
        <name>Zn(2+)</name>
        <dbReference type="ChEBI" id="CHEBI:29105"/>
        <label>1</label>
    </ligand>
</feature>
<feature type="binding site" evidence="1">
    <location>
        <position position="379"/>
    </location>
    <ligand>
        <name>Zn(2+)</name>
        <dbReference type="ChEBI" id="CHEBI:29105"/>
        <label>2</label>
    </ligand>
</feature>